<proteinExistence type="evidence at protein level"/>
<evidence type="ECO:0000255" key="1"/>
<evidence type="ECO:0000269" key="2">
    <source>
    </source>
</evidence>
<evidence type="ECO:0000269" key="3">
    <source>
    </source>
</evidence>
<evidence type="ECO:0000269" key="4">
    <source>
    </source>
</evidence>
<evidence type="ECO:0000303" key="5">
    <source>
    </source>
</evidence>
<evidence type="ECO:0000305" key="6"/>
<evidence type="ECO:0000305" key="7">
    <source>
    </source>
</evidence>
<name>NMU_RAT</name>
<dbReference type="EMBL" id="M94555">
    <property type="protein sequence ID" value="AAA41717.1"/>
    <property type="molecule type" value="mRNA"/>
</dbReference>
<dbReference type="EMBL" id="AF222764">
    <property type="protein sequence ID" value="AAF64427.1"/>
    <property type="molecule type" value="Genomic_DNA"/>
</dbReference>
<dbReference type="EMBL" id="AF222755">
    <property type="protein sequence ID" value="AAF64427.1"/>
    <property type="status" value="JOINED"/>
    <property type="molecule type" value="Genomic_DNA"/>
</dbReference>
<dbReference type="EMBL" id="AF222756">
    <property type="protein sequence ID" value="AAF64427.1"/>
    <property type="status" value="JOINED"/>
    <property type="molecule type" value="Genomic_DNA"/>
</dbReference>
<dbReference type="EMBL" id="AF222759">
    <property type="protein sequence ID" value="AAF64427.1"/>
    <property type="status" value="JOINED"/>
    <property type="molecule type" value="Genomic_DNA"/>
</dbReference>
<dbReference type="EMBL" id="AF222760">
    <property type="protein sequence ID" value="AAF64427.1"/>
    <property type="status" value="JOINED"/>
    <property type="molecule type" value="Genomic_DNA"/>
</dbReference>
<dbReference type="EMBL" id="AF222761">
    <property type="protein sequence ID" value="AAF64427.1"/>
    <property type="status" value="JOINED"/>
    <property type="molecule type" value="Genomic_DNA"/>
</dbReference>
<dbReference type="EMBL" id="AF222762">
    <property type="protein sequence ID" value="AAF64427.1"/>
    <property type="status" value="JOINED"/>
    <property type="molecule type" value="Genomic_DNA"/>
</dbReference>
<dbReference type="EMBL" id="AF222763">
    <property type="protein sequence ID" value="AAF64427.1"/>
    <property type="status" value="JOINED"/>
    <property type="molecule type" value="Genomic_DNA"/>
</dbReference>
<dbReference type="PIR" id="A45356">
    <property type="entry name" value="A45356"/>
</dbReference>
<dbReference type="RefSeq" id="NP_071575.1">
    <property type="nucleotide sequence ID" value="NM_022239.3"/>
</dbReference>
<dbReference type="BioGRID" id="248921">
    <property type="interactions" value="2"/>
</dbReference>
<dbReference type="STRING" id="10116.ENSRNOP00000002941"/>
<dbReference type="PhosphoSitePlus" id="P12760"/>
<dbReference type="PaxDb" id="10116-ENSRNOP00000002941"/>
<dbReference type="GeneID" id="63887"/>
<dbReference type="KEGG" id="rno:63887"/>
<dbReference type="UCSC" id="RGD:68388">
    <property type="organism name" value="rat"/>
</dbReference>
<dbReference type="AGR" id="RGD:68388"/>
<dbReference type="CTD" id="10874"/>
<dbReference type="RGD" id="68388">
    <property type="gene designation" value="Nmu"/>
</dbReference>
<dbReference type="VEuPathDB" id="HostDB:ENSRNOG00000002164"/>
<dbReference type="eggNOG" id="ENOG502S1QB">
    <property type="taxonomic scope" value="Eukaryota"/>
</dbReference>
<dbReference type="HOGENOM" id="CLU_090356_0_0_1"/>
<dbReference type="InParanoid" id="P12760"/>
<dbReference type="OrthoDB" id="9879773at2759"/>
<dbReference type="PhylomeDB" id="P12760"/>
<dbReference type="TreeFam" id="TF338319"/>
<dbReference type="Reactome" id="R-RNO-375276">
    <property type="pathway name" value="Peptide ligand-binding receptors"/>
</dbReference>
<dbReference type="Reactome" id="R-RNO-416476">
    <property type="pathway name" value="G alpha (q) signalling events"/>
</dbReference>
<dbReference type="Reactome" id="R-RNO-418594">
    <property type="pathway name" value="G alpha (i) signalling events"/>
</dbReference>
<dbReference type="PRO" id="PR:P12760"/>
<dbReference type="Proteomes" id="UP000002494">
    <property type="component" value="Chromosome 14"/>
</dbReference>
<dbReference type="Bgee" id="ENSRNOG00000002164">
    <property type="expression patterns" value="Expressed in duodenum and 10 other cell types or tissues"/>
</dbReference>
<dbReference type="ExpressionAtlas" id="P12760">
    <property type="expression patterns" value="baseline and differential"/>
</dbReference>
<dbReference type="GO" id="GO:0005576">
    <property type="term" value="C:extracellular region"/>
    <property type="evidence" value="ECO:0007669"/>
    <property type="project" value="UniProtKB-SubCell"/>
</dbReference>
<dbReference type="GO" id="GO:0043195">
    <property type="term" value="C:terminal bouton"/>
    <property type="evidence" value="ECO:0000314"/>
    <property type="project" value="RGD"/>
</dbReference>
<dbReference type="GO" id="GO:0042922">
    <property type="term" value="F:neuromedin U receptor binding"/>
    <property type="evidence" value="ECO:0000314"/>
    <property type="project" value="MGI"/>
</dbReference>
<dbReference type="GO" id="GO:0031839">
    <property type="term" value="F:type 1 neuromedin U receptor binding"/>
    <property type="evidence" value="ECO:0000266"/>
    <property type="project" value="RGD"/>
</dbReference>
<dbReference type="GO" id="GO:0031840">
    <property type="term" value="F:type 2 neuromedin U receptor binding"/>
    <property type="evidence" value="ECO:0000266"/>
    <property type="project" value="RGD"/>
</dbReference>
<dbReference type="GO" id="GO:0042755">
    <property type="term" value="P:eating behavior"/>
    <property type="evidence" value="ECO:0000314"/>
    <property type="project" value="RGD"/>
</dbReference>
<dbReference type="GO" id="GO:0097009">
    <property type="term" value="P:energy homeostasis"/>
    <property type="evidence" value="ECO:0000314"/>
    <property type="project" value="UniProtKB"/>
</dbReference>
<dbReference type="GO" id="GO:0001696">
    <property type="term" value="P:gastric acid secretion"/>
    <property type="evidence" value="ECO:0000315"/>
    <property type="project" value="RGD"/>
</dbReference>
<dbReference type="GO" id="GO:1903999">
    <property type="term" value="P:negative regulation of eating behavior"/>
    <property type="evidence" value="ECO:0000314"/>
    <property type="project" value="UniProtKB"/>
</dbReference>
<dbReference type="GO" id="GO:2000252">
    <property type="term" value="P:negative regulation of feeding behavior"/>
    <property type="evidence" value="ECO:0000314"/>
    <property type="project" value="UniProtKB"/>
</dbReference>
<dbReference type="GO" id="GO:0060455">
    <property type="term" value="P:negative regulation of gastric acid secretion"/>
    <property type="evidence" value="ECO:0000314"/>
    <property type="project" value="UniProtKB"/>
</dbReference>
<dbReference type="GO" id="GO:0120061">
    <property type="term" value="P:negative regulation of gastric emptying"/>
    <property type="evidence" value="ECO:0000314"/>
    <property type="project" value="UniProtKB"/>
</dbReference>
<dbReference type="GO" id="GO:0007218">
    <property type="term" value="P:neuropeptide signaling pathway"/>
    <property type="evidence" value="ECO:0000314"/>
    <property type="project" value="MGI"/>
</dbReference>
<dbReference type="GO" id="GO:0009648">
    <property type="term" value="P:photoperiodism"/>
    <property type="evidence" value="ECO:0000270"/>
    <property type="project" value="RGD"/>
</dbReference>
<dbReference type="GO" id="GO:0007204">
    <property type="term" value="P:positive regulation of cytosolic calcium ion concentration"/>
    <property type="evidence" value="ECO:0000314"/>
    <property type="project" value="UniProtKB"/>
</dbReference>
<dbReference type="GO" id="GO:0010460">
    <property type="term" value="P:positive regulation of heart rate"/>
    <property type="evidence" value="ECO:0000314"/>
    <property type="project" value="UniProtKB"/>
</dbReference>
<dbReference type="GO" id="GO:0031652">
    <property type="term" value="P:positive regulation of heat generation"/>
    <property type="evidence" value="ECO:0000314"/>
    <property type="project" value="UniProtKB"/>
</dbReference>
<dbReference type="GO" id="GO:0046887">
    <property type="term" value="P:positive regulation of hormone secretion"/>
    <property type="evidence" value="ECO:0000315"/>
    <property type="project" value="RGD"/>
</dbReference>
<dbReference type="GO" id="GO:1902722">
    <property type="term" value="P:positive regulation of prolactin secretion"/>
    <property type="evidence" value="ECO:0000314"/>
    <property type="project" value="UniProtKB"/>
</dbReference>
<dbReference type="GO" id="GO:1904058">
    <property type="term" value="P:positive regulation of sensory perception of pain"/>
    <property type="evidence" value="ECO:0000314"/>
    <property type="project" value="UniProtKB"/>
</dbReference>
<dbReference type="GO" id="GO:0045987">
    <property type="term" value="P:positive regulation of smooth muscle contraction"/>
    <property type="evidence" value="ECO:0000314"/>
    <property type="project" value="UniProtKB"/>
</dbReference>
<dbReference type="GO" id="GO:0120069">
    <property type="term" value="P:positive regulation of stomach fundus smooth muscle contraction"/>
    <property type="evidence" value="ECO:0000314"/>
    <property type="project" value="UniProtKB"/>
</dbReference>
<dbReference type="GO" id="GO:0050806">
    <property type="term" value="P:positive regulation of synaptic transmission"/>
    <property type="evidence" value="ECO:0000315"/>
    <property type="project" value="RGD"/>
</dbReference>
<dbReference type="GO" id="GO:0003084">
    <property type="term" value="P:positive regulation of systemic arterial blood pressure"/>
    <property type="evidence" value="ECO:0000314"/>
    <property type="project" value="UniProtKB"/>
</dbReference>
<dbReference type="GO" id="GO:0045187">
    <property type="term" value="P:regulation of circadian sleep/wake cycle, sleep"/>
    <property type="evidence" value="ECO:0000314"/>
    <property type="project" value="UniProtKB"/>
</dbReference>
<dbReference type="GO" id="GO:0060259">
    <property type="term" value="P:regulation of feeding behavior"/>
    <property type="evidence" value="ECO:0000266"/>
    <property type="project" value="RGD"/>
</dbReference>
<dbReference type="GO" id="GO:2000821">
    <property type="term" value="P:regulation of grooming behavior"/>
    <property type="evidence" value="ECO:0000314"/>
    <property type="project" value="UniProtKB"/>
</dbReference>
<dbReference type="GO" id="GO:0001659">
    <property type="term" value="P:temperature homeostasis"/>
    <property type="evidence" value="ECO:0000266"/>
    <property type="project" value="RGD"/>
</dbReference>
<dbReference type="InterPro" id="IPR018070">
    <property type="entry name" value="Neuromedin-U_amidation-site"/>
</dbReference>
<dbReference type="InterPro" id="IPR042384">
    <property type="entry name" value="NMU"/>
</dbReference>
<dbReference type="InterPro" id="IPR008200">
    <property type="entry name" value="NMU_C"/>
</dbReference>
<dbReference type="PANTHER" id="PTHR15390">
    <property type="entry name" value="NEUROMEDIN-U"/>
    <property type="match status" value="1"/>
</dbReference>
<dbReference type="PANTHER" id="PTHR15390:SF0">
    <property type="entry name" value="NEUROMEDIN-U"/>
    <property type="match status" value="1"/>
</dbReference>
<dbReference type="Pfam" id="PF02070">
    <property type="entry name" value="NMU"/>
    <property type="match status" value="1"/>
</dbReference>
<dbReference type="SMART" id="SM00084">
    <property type="entry name" value="NMU"/>
    <property type="match status" value="1"/>
</dbReference>
<dbReference type="PROSITE" id="PS00967">
    <property type="entry name" value="NMU"/>
    <property type="match status" value="1"/>
</dbReference>
<organism>
    <name type="scientific">Rattus norvegicus</name>
    <name type="common">Rat</name>
    <dbReference type="NCBI Taxonomy" id="10116"/>
    <lineage>
        <taxon>Eukaryota</taxon>
        <taxon>Metazoa</taxon>
        <taxon>Chordata</taxon>
        <taxon>Craniata</taxon>
        <taxon>Vertebrata</taxon>
        <taxon>Euteleostomi</taxon>
        <taxon>Mammalia</taxon>
        <taxon>Eutheria</taxon>
        <taxon>Euarchontoglires</taxon>
        <taxon>Glires</taxon>
        <taxon>Rodentia</taxon>
        <taxon>Myomorpha</taxon>
        <taxon>Muroidea</taxon>
        <taxon>Muridae</taxon>
        <taxon>Murinae</taxon>
        <taxon>Rattus</taxon>
    </lineage>
</organism>
<accession>P12760</accession>
<sequence length="174" mass="19403">MSRAANRRPGLSAGQLAAATASPLLSLLLLLACCADACRGTPISPQRLPPEQELQLWNEIPEACASFLSVDSQPQASVALRKLCRVLMEIFQKPQEQTEKDNAKRFLFHYSKTQKLGNSNVVSSVVHPLLQLVPQLHERRMKRYKVNEYQGPVAPSGGFFLFRPRNGKRSTSFI</sequence>
<keyword id="KW-0027">Amidation</keyword>
<keyword id="KW-0165">Cleavage on pair of basic residues</keyword>
<keyword id="KW-0903">Direct protein sequencing</keyword>
<keyword id="KW-0527">Neuropeptide</keyword>
<keyword id="KW-0558">Oxidation</keyword>
<keyword id="KW-1185">Reference proteome</keyword>
<keyword id="KW-0964">Secreted</keyword>
<keyword id="KW-0732">Signal</keyword>
<gene>
    <name type="primary">Nmu</name>
</gene>
<feature type="signal peptide" evidence="1">
    <location>
        <begin position="1"/>
        <end position="37"/>
    </location>
</feature>
<feature type="propeptide" id="PRO_0000019780" evidence="7">
    <location>
        <begin position="38"/>
        <end position="105"/>
    </location>
</feature>
<feature type="peptide" id="PRO_0000445769" description="Neuromedin precursor-related peptide 36" evidence="2">
    <location>
        <begin position="106"/>
        <end position="141"/>
    </location>
</feature>
<feature type="peptide" id="PRO_0000445770" description="Neuromedin precursor-related peptide 33" evidence="2">
    <location>
        <begin position="106"/>
        <end position="138"/>
    </location>
</feature>
<feature type="peptide" id="PRO_0000019781" description="Neuromedin-U-23">
    <location>
        <begin position="144"/>
        <end position="166"/>
    </location>
</feature>
<feature type="propeptide" id="PRO_0000019782">
    <location>
        <begin position="170"/>
        <end position="174"/>
    </location>
</feature>
<feature type="modified residue" description="Methionine sulfoxide; partial" evidence="2">
    <location>
        <position position="141"/>
    </location>
</feature>
<feature type="modified residue" description="Asparagine amide" evidence="3">
    <location>
        <position position="166"/>
    </location>
</feature>
<comment type="function">
    <molecule>Neuromedin-U-23</molecule>
    <text evidence="2">Ligand for receptors NMUR1 and NMUR2 (PubMed:28874765). Receptor-binding is very tight if not irreversible and triggers an increase in the cytosolic Ca(2+) concentration (PubMed:28874765). Stimulates muscle contractions of specific regions of the gastrointestinal tract. In rat, NMU stimulates contractions of stomach circular muscle.</text>
</comment>
<comment type="function">
    <molecule>Neuromedin precursor-related peptide 33</molecule>
    <text evidence="2">Does not function as a ligand for either NMUR1 or NMUR2 (PubMed:28874765). Indirectly induces prolactin release although its potency is much lower than that of neuromedin precursor-related peptide 36 (PubMed:28874765).</text>
</comment>
<comment type="function">
    <molecule>Neuromedin precursor-related peptide 36</molecule>
    <text evidence="2">Does not function as a ligand for either NMUR1 or NMUR2. Indirectly induces prolactin release from lactotroph cells in the pituitary gland, probably via the hypothalamic dopaminergic system.</text>
</comment>
<comment type="subcellular location">
    <molecule>Neuromedin-U-23</molecule>
    <subcellularLocation>
        <location evidence="7">Secreted</location>
    </subcellularLocation>
</comment>
<comment type="tissue specificity">
    <text evidence="2 4">Expressed throughout the gastrointestinal tract with highest levels in the duodenum and jejunum (PubMed:7916966). Low levels in spinal cord, hypothalamus, and stomach (PubMed:7916966). Neuromedin-U-23: Expressed in the small intestine and the pituitary gland (at protein level) (PubMed:28874765). Neuromedin precursor-related peptides: Expressed in pituitary gland and small intestine (at protein level) (PubMed:28874765).</text>
</comment>
<comment type="mass spectrometry" mass="3759.8" method="MALDI" evidence="2">
    <molecule>Neuromedin precursor-related peptide 33</molecule>
    <text>Neuromedin U precursor-related peptide 33.</text>
</comment>
<comment type="mass spectrometry" mass="4202.2" method="MALDI" evidence="2">
    <molecule>Neuromedin precursor-related peptide 36</molecule>
    <text>Neuromedin U precursor-related peptide 36.</text>
</comment>
<comment type="mass spectrometry" mass="4218.8" method="MALDI" evidence="2">
    <molecule>Neuromedin precursor-related peptide 36</molecule>
    <text>Neuromedin U precursor-related peptide 36, oxidized.</text>
</comment>
<comment type="similarity">
    <text evidence="6">Belongs to the NmU family.</text>
</comment>
<reference key="1">
    <citation type="journal article" date="1992" name="Mol. Endocrinol.">
        <title>Characterization of complementary DNA encoding the rat neuromedin U precursor.</title>
        <authorList>
            <person name="Lo G."/>
            <person name="Legon S."/>
            <person name="Austin C."/>
            <person name="Wallis S."/>
            <person name="Wang Z."/>
            <person name="Bloom S.R."/>
        </authorList>
    </citation>
    <scope>NUCLEOTIDE SEQUENCE [MRNA]</scope>
    <source>
        <strain>Wistar</strain>
    </source>
</reference>
<reference key="2">
    <citation type="submission" date="2000-01" db="EMBL/GenBank/DDBJ databases">
        <title>Molecular cloning, characterization and chromosomal localization of the rat neuromedin U (NmU) gene.</title>
        <authorList>
            <person name="Sharma S.K."/>
            <person name="Lo G."/>
            <person name="Szpirer C."/>
            <person name="Bloom S.R."/>
        </authorList>
    </citation>
    <scope>NUCLEOTIDE SEQUENCE [GENOMIC DNA]</scope>
    <source>
        <strain>Sprague-Dawley</strain>
    </source>
</reference>
<reference key="3">
    <citation type="journal article" date="2017" name="Sci. Rep.">
        <title>Identification of neuromedin U precursor-related peptide and its possible role in the regulation of prolactin release.</title>
        <authorList>
            <person name="Mori K."/>
            <person name="Ida T."/>
            <person name="Fudetani M."/>
            <person name="Mori M."/>
            <person name="Kaiya H."/>
            <person name="Hino J."/>
            <person name="Nakahara K."/>
            <person name="Murakami N."/>
            <person name="Miyazato M."/>
            <person name="Kangawa K."/>
        </authorList>
    </citation>
    <scope>PROTEIN SEQUENCE OF 106-141</scope>
    <scope>FUNCTION (NEUROMEDIN-U-23; NEUROMEDIN PRECURSOR-RELATED PEPTIDE 33 AND NEUROMEDIN PRECURSOR-RELATED PEPTIDE 36)</scope>
    <scope>TISSUE SPECIFICITY</scope>
    <scope>PROTEOLYTIC PROCESSING</scope>
    <scope>MASS SPECTROMETRY</scope>
    <scope>OXIDATION AT MET-141</scope>
    <source>
        <tissue evidence="5">Brain</tissue>
        <tissue evidence="5">Small intestine</tissue>
    </source>
</reference>
<reference key="4">
    <citation type="journal article" date="1988" name="Biochem. Biophys. Res. Commun.">
        <title>Isolation and structural determination of rat neuromedin U.</title>
        <authorList>
            <person name="Minamino N."/>
            <person name="Kangawa K."/>
            <person name="Honzawa M."/>
            <person name="Matsuo H."/>
        </authorList>
    </citation>
    <scope>PROTEIN SEQUENCE OF 144-166</scope>
    <scope>AMIDATION AT ASN-166</scope>
    <source>
        <tissue>Small intestine</tissue>
    </source>
</reference>
<reference key="5">
    <citation type="journal article" date="1988" name="J. Neurochem.">
        <title>Primary structure of neuromedin U from the rat.</title>
        <authorList>
            <person name="Conlon J.M."/>
            <person name="Domin J."/>
            <person name="Thim L."/>
            <person name="Dimarzo V."/>
            <person name="Morris H.R."/>
            <person name="Bloom S.R."/>
        </authorList>
    </citation>
    <scope>PROTEIN SEQUENCE OF 144-166</scope>
</reference>
<reference key="6">
    <citation type="journal article" date="1994" name="J. Mol. Endocrinol.">
        <title>Distribution and developmental pattern of neuromedin U expression in the rat gastrointestinal tract.</title>
        <authorList>
            <person name="Austin C."/>
            <person name="Oka M."/>
            <person name="Nandha K.A."/>
            <person name="Legon S."/>
            <person name="Khandan-Nia N."/>
            <person name="Lo G."/>
            <person name="Bloom S.R."/>
        </authorList>
    </citation>
    <scope>TISSUE SPECIFICITY</scope>
</reference>
<reference key="7">
    <citation type="journal article" date="2005" name="EMBO J.">
        <title>Identification of neuromedin S and its possible role in the mammalian circadian oscillator system.</title>
        <authorList>
            <person name="Mori K."/>
            <person name="Miyazato M."/>
            <person name="Ida T."/>
            <person name="Murakami N."/>
            <person name="Serino R."/>
            <person name="Ueta Y."/>
            <person name="Kojima M."/>
            <person name="Kangawa K."/>
        </authorList>
    </citation>
    <scope>PROTEOLYTIC PROCESSING</scope>
</reference>
<protein>
    <recommendedName>
        <fullName>Neuromedin-U</fullName>
    </recommendedName>
    <component>
        <recommendedName>
            <fullName evidence="5">Neuromedin precursor-related peptide 36</fullName>
            <shortName evidence="5">NURP36</shortName>
        </recommendedName>
    </component>
    <component>
        <recommendedName>
            <fullName evidence="5">Neuromedin precursor-related peptide 33</fullName>
            <shortName evidence="5">NURP33</shortName>
        </recommendedName>
    </component>
    <component>
        <recommendedName>
            <fullName>Neuromedin-U-23</fullName>
            <shortName>NmU-23</shortName>
        </recommendedName>
    </component>
</protein>